<organism>
    <name type="scientific">Mus musculus</name>
    <name type="common">Mouse</name>
    <dbReference type="NCBI Taxonomy" id="10090"/>
    <lineage>
        <taxon>Eukaryota</taxon>
        <taxon>Metazoa</taxon>
        <taxon>Chordata</taxon>
        <taxon>Craniata</taxon>
        <taxon>Vertebrata</taxon>
        <taxon>Euteleostomi</taxon>
        <taxon>Mammalia</taxon>
        <taxon>Eutheria</taxon>
        <taxon>Euarchontoglires</taxon>
        <taxon>Glires</taxon>
        <taxon>Rodentia</taxon>
        <taxon>Myomorpha</taxon>
        <taxon>Muroidea</taxon>
        <taxon>Muridae</taxon>
        <taxon>Murinae</taxon>
        <taxon>Mus</taxon>
        <taxon>Mus</taxon>
    </lineage>
</organism>
<accession>P56960</accession>
<accession>B1ARY9</accession>
<accession>Q9QYS8</accession>
<accession>Q9R0B1</accession>
<sequence length="887" mass="100942">MAPPSPREHQSAPATSATKPDAEMVLPGFPDADSFVKFALGSVVAVTKASGGLPQFGDEYDFYRSFPAFQAFCETQGDRLLQCMSRVMQYHGCRSNIKDRSKVTELEDKFDLLVDTNDVILERVGMLLDEASGVNKHQQPVLPAGLQVPKTIVSSWNRKAGEYGKKAKSETFRLLHAKNIVRPQLRFREKIDNSNTPFLPKIFVKPNARKPLPLALSKERRERPQDRPEDLDVPPALADFIHQQRTQQVEQDMFAHPYQYELDHFTPPQSVLQRPKPQLYRAVGETPCHLVSSLDELVELNEKLLGCQEFAVDLEHHSYRSFLGLTCLMQISTRTEDFIVDTLELRSDMYILNESLTDPAIVKVFHGADSDIEWLQKDFGLYVVNMFDTHQAARLLNLARHSLDHLLRLYCGVESNKQYQLADWRIRPLPEEMLSYARDDTHYLLYIYDRMRLELWERGNHQPVQLQVVWQRSRDICLKKFVKPIFTDESYLELYRKQKKHLNSQQLTAFQLLFAWRDKTARREDESYGYVLPNHMMLKIAEELPKEPQGIIACCNPVPPLVRQQINEMHLLIQQAREMPLLKSENAAGVRKSGPLPSAERLENDLFGPHDCSHAPPDNYQNTSTDGTLPLQKQPSLFTEGKEETSVDAGCLLATAVITLFSEPNTEEGGKTPLTVAQKKAQNIMQSFENPFRMFLPSLEHKAHISQAAKFDPSSKIYEISNRWKLASQVQVQKEPKEATKKKVAEQTAAREEAKEEAAAGVLEQAIPVRQQAALENATKKRERATSDLRTIEQKQEKKRLKSSKKAKDPDPPGKDFSPYDYSQSDFRAFAGDSKSKPSSQFDPNKLAPSGKKGVGAKKCKQSVGNKSMSFAVGKSDRGFRHNWPKR</sequence>
<keyword id="KW-0963">Cytoplasm</keyword>
<keyword id="KW-0903">Direct protein sequencing</keyword>
<keyword id="KW-0227">DNA damage</keyword>
<keyword id="KW-0234">DNA repair</keyword>
<keyword id="KW-0269">Exonuclease</keyword>
<keyword id="KW-0271">Exosome</keyword>
<keyword id="KW-0378">Hydrolase</keyword>
<keyword id="KW-1017">Isopeptide bond</keyword>
<keyword id="KW-0460">Magnesium</keyword>
<keyword id="KW-0479">Metal-binding</keyword>
<keyword id="KW-0866">Nonsense-mediated mRNA decay</keyword>
<keyword id="KW-0540">Nuclease</keyword>
<keyword id="KW-0539">Nucleus</keyword>
<keyword id="KW-0597">Phosphoprotein</keyword>
<keyword id="KW-1185">Reference proteome</keyword>
<keyword id="KW-0694">RNA-binding</keyword>
<keyword id="KW-0698">rRNA processing</keyword>
<keyword id="KW-0832">Ubl conjugation</keyword>
<comment type="function">
    <text evidence="1 6 7 8 9">Catalytic component of the RNA exosome complex which has 3'-&gt;5' exoribonuclease activity and participates in a multitude of cellular RNA processing and degradation events. In the nucleus, the RNA exosome complex is involved in proper maturation of stable RNA species such as rRNA, snRNA and snoRNA, in the elimination of RNA processing by-products and non-coding 'pervasive' transcripts, such as antisense RNA species and promoter-upstream transcripts (PROMPTs), and of mRNAs with processing defects, thereby limiting or excluding their export to the cytoplasm. Part of the small subunit (SSU) processome, first precursor of the small eukaryotic ribosomal subunit. During the assembly of the SSU processome in the nucleolus, many ribosome biogenesis factors, an RNA chaperone and ribosomal proteins associate with the nascent pre-rRNA and work in concert to generate RNA folding, modifications, rearrangements and cleavage as well as targeted degradation of pre-ribosomal RNA by the RNA exosome. The RNA exosome may be involved in Ig class switch recombination (CSR) and/or Ig variable region somatic hypermutation (SHM) by targeting AICDA deamination activity to transcribed dsDNA substrates. In the cytoplasm, the RNA exosome complex is involved in general mRNA turnover and specifically degrades inherently unstable mRNAs containing AU-rich elements (AREs) within their 3' untranslated regions, and in RNA surveillance pathways, preventing translation of aberrant mRNAs. It seems to be involved in degradation of histone mRNA. EXOSC10 is required for nucleolar localization of C1D and probably mediates the association of MTREX, C1D and MPHOSPH6 with the RNA exosome involved in the maturation of 5.8S rRNA (By similarity). Plays a role in the recruitment of replication protein A complex (RPA) and RAD51 to DNA double-strand breaks caused by irradiation, contributing to DNA repair by homologous recombination (By similarity). Regulates levels of damage-induced RNAs in order to prevent DNA-RNA hybrid formation at DNA double-strand breaks and limit DNA end resection after damage (By similarity). Plays a role in oocyte development, maturation and survival (PubMed:32313933, PubMed:36923944). Required for normal testis development and mitotic division of spermatogonia (PubMed:29118343). Plays a role in proper embryo development (PubMed:32313933, PubMed:34965385, PubMed:36923944). Required for global protein translation (By similarity). Required for cell proliferation (By similarity).</text>
</comment>
<comment type="cofactor">
    <cofactor evidence="1">
        <name>Mg(2+)</name>
        <dbReference type="ChEBI" id="CHEBI:18420"/>
    </cofactor>
</comment>
<comment type="subunit">
    <text evidence="1">Component of the RNA exosome complex (By similarity). The catalytically inactive RNA exosome core complex (Exo-9) associates with the catalytic subunit EXOSC10/RRP6 (via its N-terminus) (By similarity). Exo-9 may associate with DIS3 to form the nucleolar exosome complex, or DIS3L to form the cytoplasmic exosome complex (By similarity). The RNA exosome complex interacts with cofactors C1D/RRP47, MPHOSPH6/MPP6 and MTREX/MTR4 (By similarity). Interacts with MTREX; the interaction with MTREX mediates the association of MTREX with nuclear RNA exosomes (By similarity). Part of the small subunit (SSU) processome, composed of more than 70 proteins and the RNA chaperone small nucleolar RNA (snoRNA) U3 (By similarity). Interacts with ALYREF/THOC4 (By similarity). Interacts with DHX36; this interaction occurs in a RNase-insensitive manner (By similarity). Interacts with NRDE2 (By similarity). Interacts (via C-terminus) with USP36 (via C-terminus); the interaction is facilitated by the association with RNA and promotes sumoylation of EXOSC10 (By similarity).</text>
</comment>
<comment type="subcellular location">
    <subcellularLocation>
        <location evidence="6 8">Cytoplasm</location>
    </subcellularLocation>
    <subcellularLocation>
        <location evidence="6 7 8 9">Nucleus</location>
    </subcellularLocation>
    <subcellularLocation>
        <location evidence="6 8">Nucleus</location>
        <location evidence="6 8">Nucleolus</location>
    </subcellularLocation>
    <subcellularLocation>
        <location evidence="8">Nucleus</location>
        <location evidence="8">Nucleoplasm</location>
    </subcellularLocation>
    <text evidence="1 6 8">Strongly enriched in the nucleolus and a small amount has been found in cytoplasm supporting the existence of a nucleolar RNA exosome complex form (By similarity). In oocytes, the protein is diffusely distributed in the cytoplasm, in zygotes it is found in both the cytoplasm and pronuclei and from the two-cell stage onward the protein accumulates in the nucleus, especially at the nucleolus precursor body periphery (PubMed:34965385). In metaphase blastomeres that lack structured nuclei, the protein localizes diffusely in the cytoplasm (PubMed:34965385). In spermatocytes, the protein accumulates in the nucleolus during zygotene, late pachytene and diplotene sub-stages and in the cytoplasm during metaphase I (PubMed:29118343).</text>
</comment>
<comment type="tissue specificity">
    <text evidence="5 6 9">Expressed in ovary (at protein level) (PubMed:36923944). Expressed in testis (at protein level) (PubMed:29118343). Expressed in lung (at protein level) (PubMed:26857222).</text>
</comment>
<comment type="developmental stage">
    <text evidence="8">Expressed in oocytes and during all the stages of early embryogenesis (at protein level).</text>
</comment>
<comment type="induction">
    <text evidence="5">Down-regulated by mild hypothermia (at protein level).</text>
</comment>
<comment type="PTM">
    <text evidence="1">Sumoylated by USP36; sumoylation does not significantly affect EXOSC10 nucleolar localization and association with core exosome and USP36, but regulates the nucleolar RNA exosome activity in rRNA processing by promoting binding of EXOSC10 to pre-rRNAs. Effects of sumoylation on EXOSC10 levels vary between different studies. Sumoylation of EXOSC10 is required for the modulation of EXOSC10 effects on cellular protein translation and cell proliferation. Sumoylation is promoted by mild hypothermia.</text>
</comment>
<comment type="disruption phenotype">
    <text evidence="6 7 8 9">Prenatal lethality (PubMed:29118343, PubMed:32313933, PubMed:34965385). Developmental arrest at the two-cell to eight-cell embryo/morula transition stages (PubMed:32313933, PubMed:34965385). Oocyte-specific knockdown does not affect the onset of puberty but results in the loss of sexual receptivity and cyclicity and leads to subfertility/infertility in female mice (PubMed:32313933, PubMed:36923944). Rapid depletion of oocytes in ovaries and disorganization of the ovarian tissue (PubMed:36923944). Dysregulation of the pathways involved in meiotic cell cycle progression, oocyte maturation, ribosome biogenesis, DNA replication and repair, mitochondria activity, transcriptional control, RNA metabolism, endomembrane and nucleocytoplasmic transport (PubMed:32313933, PubMed:36923944). Aberrant formation of the endomembrane system in the oocytes (PubMed:32313933). Defects in pre-rRNA processing in the oocytes (PubMed:32313933). Testis-specific knockdown leads to subfertility in male mice (PubMed:29118343). Abnormal testicular development and defects in spermatogenesis (PubMed:29118343).</text>
</comment>
<comment type="similarity">
    <text evidence="10">Belongs to the exosome component 10/RRP6 family.</text>
</comment>
<feature type="chain" id="PRO_0000087134" description="Exosome complex component 10">
    <location>
        <begin position="1"/>
        <end position="887"/>
    </location>
</feature>
<feature type="domain" description="3'-5' exonuclease" evidence="2">
    <location>
        <begin position="289"/>
        <end position="455"/>
    </location>
</feature>
<feature type="domain" description="HRDC" evidence="3">
    <location>
        <begin position="503"/>
        <end position="583"/>
    </location>
</feature>
<feature type="region of interest" description="Disordered" evidence="4">
    <location>
        <begin position="1"/>
        <end position="23"/>
    </location>
</feature>
<feature type="region of interest" description="Disordered" evidence="4">
    <location>
        <begin position="734"/>
        <end position="757"/>
    </location>
</feature>
<feature type="region of interest" description="Disordered" evidence="4">
    <location>
        <begin position="777"/>
        <end position="887"/>
    </location>
</feature>
<feature type="compositionally biased region" description="Basic and acidic residues" evidence="4">
    <location>
        <begin position="1"/>
        <end position="10"/>
    </location>
</feature>
<feature type="compositionally biased region" description="Basic and acidic residues" evidence="4">
    <location>
        <begin position="778"/>
        <end position="796"/>
    </location>
</feature>
<feature type="binding site" evidence="1">
    <location>
        <position position="313"/>
    </location>
    <ligand>
        <name>Mg(2+)</name>
        <dbReference type="ChEBI" id="CHEBI:18420"/>
        <label>1</label>
    </ligand>
</feature>
<feature type="binding site" evidence="1">
    <location>
        <position position="313"/>
    </location>
    <ligand>
        <name>Mg(2+)</name>
        <dbReference type="ChEBI" id="CHEBI:18420"/>
        <label>2</label>
    </ligand>
</feature>
<feature type="binding site" evidence="1">
    <location>
        <position position="315"/>
    </location>
    <ligand>
        <name>Mg(2+)</name>
        <dbReference type="ChEBI" id="CHEBI:18420"/>
        <label>2</label>
    </ligand>
</feature>
<feature type="binding site" evidence="1">
    <location>
        <position position="371"/>
    </location>
    <ligand>
        <name>Mg(2+)</name>
        <dbReference type="ChEBI" id="CHEBI:18420"/>
        <label>1</label>
    </ligand>
</feature>
<feature type="binding site" evidence="1">
    <location>
        <position position="440"/>
    </location>
    <ligand>
        <name>Mg(2+)</name>
        <dbReference type="ChEBI" id="CHEBI:18420"/>
        <label>2</label>
    </ligand>
</feature>
<feature type="site" description="Not ubiquitinated" evidence="1">
    <location>
        <position position="583"/>
    </location>
</feature>
<feature type="modified residue" description="Phosphoserine" evidence="1">
    <location>
        <position position="823"/>
    </location>
</feature>
<feature type="cross-link" description="Glycyl lysine isopeptide (Lys-Gly) (interchain with G-Cter in SUMO2)" evidence="1">
    <location>
        <position position="19"/>
    </location>
</feature>
<feature type="cross-link" description="Glycyl lysine isopeptide (Lys-Gly) (interchain with G-Cter in SUMO1); alternate" evidence="1">
    <location>
        <position position="583"/>
    </location>
</feature>
<feature type="cross-link" description="Glycyl lysine isopeptide (Lys-Gly) (interchain with G-Cter in SUMO2); alternate" evidence="1">
    <location>
        <position position="583"/>
    </location>
</feature>
<feature type="cross-link" description="Glycyl lysine isopeptide (Lys-Gly) (interchain with G-Cter in SUMO2)" evidence="1">
    <location>
        <position position="710"/>
    </location>
</feature>
<feature type="cross-link" description="Glycyl lysine isopeptide (Lys-Gly) (interchain with G-Cter in SUMO2)" evidence="1">
    <location>
        <position position="835"/>
    </location>
</feature>
<feature type="cross-link" description="Glycyl lysine isopeptide (Lys-Gly) (interchain with G-Cter in SUMO2)" evidence="1">
    <location>
        <position position="861"/>
    </location>
</feature>
<feature type="cross-link" description="Glycyl lysine isopeptide (Lys-Gly) (interchain with G-Cter in SUMO2)" evidence="1">
    <location>
        <position position="875"/>
    </location>
</feature>
<feature type="mutagenesis site" description="Reduces exoribonuclease activity towards poly(A) RNA substrates; when associated with Q-315." evidence="7">
    <original>D</original>
    <variation>N</variation>
    <location>
        <position position="313"/>
    </location>
</feature>
<feature type="mutagenesis site" description="Reduces exoribonuclease activity towards poly(A) RNA substrates; when associated with N-313." evidence="7">
    <original>E</original>
    <variation>Q</variation>
    <location>
        <position position="315"/>
    </location>
</feature>
<feature type="sequence conflict" description="In Ref. 1; AAF01779/AAF01781." evidence="10" ref="1">
    <original>I</original>
    <variation>V</variation>
    <location>
        <position position="792"/>
    </location>
</feature>
<feature type="sequence conflict" description="In Ref. 1; AAF01779." evidence="10" ref="1">
    <original>C</original>
    <variation>F</variation>
    <location>
        <position position="860"/>
    </location>
</feature>
<name>EXOSX_MOUSE</name>
<evidence type="ECO:0000250" key="1">
    <source>
        <dbReference type="UniProtKB" id="Q01780"/>
    </source>
</evidence>
<evidence type="ECO:0000255" key="2"/>
<evidence type="ECO:0000255" key="3">
    <source>
        <dbReference type="PROSITE-ProRule" id="PRU00328"/>
    </source>
</evidence>
<evidence type="ECO:0000256" key="4">
    <source>
        <dbReference type="SAM" id="MobiDB-lite"/>
    </source>
</evidence>
<evidence type="ECO:0000269" key="5">
    <source>
    </source>
</evidence>
<evidence type="ECO:0000269" key="6">
    <source>
    </source>
</evidence>
<evidence type="ECO:0000269" key="7">
    <source>
    </source>
</evidence>
<evidence type="ECO:0000269" key="8">
    <source>
    </source>
</evidence>
<evidence type="ECO:0000269" key="9">
    <source>
    </source>
</evidence>
<evidence type="ECO:0000305" key="10"/>
<proteinExistence type="evidence at protein level"/>
<reference key="1">
    <citation type="journal article" date="2000" name="Genomics">
        <title>Structure and localization of mouse Pmscl1 and Pmscl2 genes.</title>
        <authorList>
            <person name="Bliskovski V."/>
            <person name="Liddell R."/>
            <person name="Ramsay E.S."/>
            <person name="Miller M.J."/>
            <person name="Mock B.A."/>
        </authorList>
    </citation>
    <scope>NUCLEOTIDE SEQUENCE [GENOMIC DNA / MRNA]</scope>
    <source>
        <strain>129/SvJ</strain>
        <strain>BALB/cJ</strain>
    </source>
</reference>
<reference key="2">
    <citation type="journal article" date="2009" name="PLoS Biol.">
        <title>Lineage-specific biology revealed by a finished genome assembly of the mouse.</title>
        <authorList>
            <person name="Church D.M."/>
            <person name="Goodstadt L."/>
            <person name="Hillier L.W."/>
            <person name="Zody M.C."/>
            <person name="Goldstein S."/>
            <person name="She X."/>
            <person name="Bult C.J."/>
            <person name="Agarwala R."/>
            <person name="Cherry J.L."/>
            <person name="DiCuccio M."/>
            <person name="Hlavina W."/>
            <person name="Kapustin Y."/>
            <person name="Meric P."/>
            <person name="Maglott D."/>
            <person name="Birtle Z."/>
            <person name="Marques A.C."/>
            <person name="Graves T."/>
            <person name="Zhou S."/>
            <person name="Teague B."/>
            <person name="Potamousis K."/>
            <person name="Churas C."/>
            <person name="Place M."/>
            <person name="Herschleb J."/>
            <person name="Runnheim R."/>
            <person name="Forrest D."/>
            <person name="Amos-Landgraf J."/>
            <person name="Schwartz D.C."/>
            <person name="Cheng Z."/>
            <person name="Lindblad-Toh K."/>
            <person name="Eichler E.E."/>
            <person name="Ponting C.P."/>
        </authorList>
    </citation>
    <scope>NUCLEOTIDE SEQUENCE [LARGE SCALE GENOMIC DNA]</scope>
    <source>
        <strain>C57BL/6J</strain>
    </source>
</reference>
<reference key="3">
    <citation type="submission" date="2009-01" db="UniProtKB">
        <authorList>
            <person name="Lubec G."/>
            <person name="Sunyer B."/>
            <person name="Chen W.-Q."/>
        </authorList>
    </citation>
    <scope>PROTEIN SEQUENCE OF 395-400</scope>
    <scope>IDENTIFICATION BY MASS SPECTROMETRY</scope>
    <source>
        <strain>OF1</strain>
        <tissue>Hippocampus</tissue>
    </source>
</reference>
<reference key="4">
    <citation type="journal article" date="2010" name="Cell">
        <title>A tissue-specific atlas of mouse protein phosphorylation and expression.</title>
        <authorList>
            <person name="Huttlin E.L."/>
            <person name="Jedrychowski M.P."/>
            <person name="Elias J.E."/>
            <person name="Goswami T."/>
            <person name="Rad R."/>
            <person name="Beausoleil S.A."/>
            <person name="Villen J."/>
            <person name="Haas W."/>
            <person name="Sowa M.E."/>
            <person name="Gygi S.P."/>
        </authorList>
    </citation>
    <scope>IDENTIFICATION BY MASS SPECTROMETRY [LARGE SCALE ANALYSIS]</scope>
    <source>
        <tissue>Lung</tissue>
        <tissue>Spleen</tissue>
        <tissue>Testis</tissue>
    </source>
</reference>
<reference evidence="10" key="5">
    <citation type="journal article" date="2016" name="RNA">
        <title>Cooling-induced SUMOylation of EXOSC10 down-regulates ribosome biogenesis.</title>
        <authorList>
            <person name="Knight J.R."/>
            <person name="Bastide A."/>
            <person name="Peretti D."/>
            <person name="Roobol A."/>
            <person name="Roobol J."/>
            <person name="Mallucci G.R."/>
            <person name="Smales C.M."/>
            <person name="Willis A.E."/>
        </authorList>
    </citation>
    <scope>TISSUE SPECIFICITY</scope>
    <scope>INDUCTION</scope>
</reference>
<reference evidence="10" key="6">
    <citation type="journal article" date="2017" name="Sci. Rep.">
        <title>EXOSC10/Rrp6 is post-translationally regulated in male germ cells and controls the onset of spermatogenesis.</title>
        <authorList>
            <person name="Jamin S.P."/>
            <person name="Petit F.G."/>
            <person name="Kervarrec C."/>
            <person name="Smagulova F."/>
            <person name="Illner D."/>
            <person name="Scherthan H."/>
            <person name="Primig M."/>
        </authorList>
    </citation>
    <scope>FUNCTION</scope>
    <scope>SUBCELLULAR LOCATION</scope>
    <scope>TISSUE SPECIFICITY</scope>
    <scope>DISRUPTION PHENOTYPE</scope>
</reference>
<reference evidence="10" key="7">
    <citation type="journal article" date="2020" name="Nucleic Acids Res.">
        <title>EXOSC10 sculpts the transcriptome during the growth-to-maturation transition in mouse oocytes.</title>
        <authorList>
            <person name="Wu D."/>
            <person name="Dean J."/>
        </authorList>
    </citation>
    <scope>FUNCTION</scope>
    <scope>SUBCELLULAR LOCATION</scope>
    <scope>DISRUPTION PHENOTYPE</scope>
    <scope>MUTAGENESIS OF ASP-313 AND GLU-315</scope>
</reference>
<reference evidence="10" key="8">
    <citation type="journal article" date="2022" name="Dev. Biol.">
        <title>EXOSC10/Rrp6 is essential for the eight-cell embryo/morula transition.</title>
        <authorList>
            <person name="Petit F.G."/>
            <person name="Jamin S.P."/>
            <person name="Kernanec P.Y."/>
            <person name="Becker E."/>
            <person name="Halet G."/>
            <person name="Primig M."/>
        </authorList>
    </citation>
    <scope>FUNCTION</scope>
    <scope>SUBCELLULAR LOCATION</scope>
    <scope>DISRUPTION PHENOTYPE</scope>
    <scope>DEVELOPMENTAL STAGE</scope>
</reference>
<reference evidence="10" key="9">
    <citation type="journal article" date="2023" name="Int. J. Biol. Sci.">
        <title>Inactivation of Exosc10 in the oocyte impairs oocyte development and maturation, leading to a depletion of the ovarian reserve in mice.</title>
        <authorList>
            <person name="Demini L."/>
            <person name="Kervarrec C."/>
            <person name="Guillot L."/>
            <person name="Com E."/>
            <person name="Lavigne R."/>
            <person name="Kernanec P.Y."/>
            <person name="Primig M."/>
            <person name="Pineau C."/>
            <person name="Petit F.G."/>
            <person name="Jamin S.P."/>
        </authorList>
    </citation>
    <scope>FUNCTION</scope>
    <scope>SUBCELLULAR LOCATION</scope>
    <scope>TISSUE SPECIFICITY</scope>
    <scope>DISRUPTION PHENOTYPE</scope>
</reference>
<gene>
    <name type="primary">Exosc10</name>
    <name type="synonym">Pmscl2</name>
</gene>
<protein>
    <recommendedName>
        <fullName>Exosome complex component 10</fullName>
        <ecNumber evidence="1">3.1.13.-</ecNumber>
    </recommendedName>
    <alternativeName>
        <fullName>Autoantigen PM/Scl 2 homolog</fullName>
    </alternativeName>
    <alternativeName>
        <fullName>Polymyositis/scleroderma autoantigen 2 homolog</fullName>
    </alternativeName>
</protein>
<dbReference type="EC" id="3.1.13.-" evidence="1"/>
<dbReference type="EMBL" id="AF091392">
    <property type="protein sequence ID" value="AAF01779.1"/>
    <property type="molecule type" value="mRNA"/>
</dbReference>
<dbReference type="EMBL" id="AF091505">
    <property type="protein sequence ID" value="AAF01781.1"/>
    <property type="molecule type" value="Genomic_DNA"/>
</dbReference>
<dbReference type="EMBL" id="AF091506">
    <property type="protein sequence ID" value="AAF01781.1"/>
    <property type="status" value="JOINED"/>
    <property type="molecule type" value="Genomic_DNA"/>
</dbReference>
<dbReference type="EMBL" id="AF092074">
    <property type="protein sequence ID" value="AAF01781.1"/>
    <property type="status" value="JOINED"/>
    <property type="molecule type" value="Genomic_DNA"/>
</dbReference>
<dbReference type="EMBL" id="AF092075">
    <property type="protein sequence ID" value="AAF01781.1"/>
    <property type="status" value="JOINED"/>
    <property type="molecule type" value="Genomic_DNA"/>
</dbReference>
<dbReference type="EMBL" id="AF092076">
    <property type="protein sequence ID" value="AAF01781.1"/>
    <property type="status" value="JOINED"/>
    <property type="molecule type" value="Genomic_DNA"/>
</dbReference>
<dbReference type="EMBL" id="AF092077">
    <property type="protein sequence ID" value="AAF01781.1"/>
    <property type="status" value="JOINED"/>
    <property type="molecule type" value="Genomic_DNA"/>
</dbReference>
<dbReference type="EMBL" id="AF092078">
    <property type="protein sequence ID" value="AAF01781.1"/>
    <property type="status" value="JOINED"/>
    <property type="molecule type" value="Genomic_DNA"/>
</dbReference>
<dbReference type="EMBL" id="AF092079">
    <property type="protein sequence ID" value="AAF01781.1"/>
    <property type="status" value="JOINED"/>
    <property type="molecule type" value="Genomic_DNA"/>
</dbReference>
<dbReference type="EMBL" id="AF092080">
    <property type="protein sequence ID" value="AAF01781.1"/>
    <property type="status" value="JOINED"/>
    <property type="molecule type" value="Genomic_DNA"/>
</dbReference>
<dbReference type="EMBL" id="AF092081">
    <property type="protein sequence ID" value="AAF01781.1"/>
    <property type="status" value="JOINED"/>
    <property type="molecule type" value="Genomic_DNA"/>
</dbReference>
<dbReference type="EMBL" id="AF092082">
    <property type="protein sequence ID" value="AAF01781.1"/>
    <property type="status" value="JOINED"/>
    <property type="molecule type" value="Genomic_DNA"/>
</dbReference>
<dbReference type="EMBL" id="AF092083">
    <property type="protein sequence ID" value="AAF01781.1"/>
    <property type="status" value="JOINED"/>
    <property type="molecule type" value="Genomic_DNA"/>
</dbReference>
<dbReference type="EMBL" id="AL606969">
    <property type="status" value="NOT_ANNOTATED_CDS"/>
    <property type="molecule type" value="Genomic_DNA"/>
</dbReference>
<dbReference type="EMBL" id="AL713995">
    <property type="status" value="NOT_ANNOTATED_CDS"/>
    <property type="molecule type" value="Genomic_DNA"/>
</dbReference>
<dbReference type="CCDS" id="CCDS18939.1"/>
<dbReference type="RefSeq" id="NP_057908.2">
    <property type="nucleotide sequence ID" value="NM_016699.4"/>
</dbReference>
<dbReference type="SMR" id="P56960"/>
<dbReference type="BioGRID" id="206151">
    <property type="interactions" value="3"/>
</dbReference>
<dbReference type="ComplexPortal" id="CPX-594">
    <property type="entry name" value="Nuclear exosome complex, Dis3-Exosc10 variant"/>
</dbReference>
<dbReference type="ComplexPortal" id="CPX-595">
    <property type="entry name" value="Nucleolar exosome complex, Exosc10 variant"/>
</dbReference>
<dbReference type="ComplexPortal" id="CPX-601">
    <property type="entry name" value="Cytoplasmic exosome complex, Dis3l-Exosc10 variant"/>
</dbReference>
<dbReference type="CORUM" id="P56960"/>
<dbReference type="FunCoup" id="P56960">
    <property type="interactions" value="4543"/>
</dbReference>
<dbReference type="IntAct" id="P56960">
    <property type="interactions" value="2"/>
</dbReference>
<dbReference type="MINT" id="P56960"/>
<dbReference type="STRING" id="10090.ENSMUSP00000017408"/>
<dbReference type="iPTMnet" id="P56960"/>
<dbReference type="PhosphoSitePlus" id="P56960"/>
<dbReference type="SwissPalm" id="P56960"/>
<dbReference type="PaxDb" id="10090-ENSMUSP00000017408"/>
<dbReference type="PeptideAtlas" id="P56960"/>
<dbReference type="ProteomicsDB" id="275706"/>
<dbReference type="Pumba" id="P56960"/>
<dbReference type="Antibodypedia" id="13683">
    <property type="antibodies" value="193 antibodies from 30 providers"/>
</dbReference>
<dbReference type="DNASU" id="50912"/>
<dbReference type="Ensembl" id="ENSMUST00000017408.14">
    <property type="protein sequence ID" value="ENSMUSP00000017408.8"/>
    <property type="gene ID" value="ENSMUSG00000017264.17"/>
</dbReference>
<dbReference type="GeneID" id="50912"/>
<dbReference type="KEGG" id="mmu:50912"/>
<dbReference type="UCSC" id="uc008vut.2">
    <property type="organism name" value="mouse"/>
</dbReference>
<dbReference type="AGR" id="MGI:1355322"/>
<dbReference type="CTD" id="5394"/>
<dbReference type="MGI" id="MGI:1355322">
    <property type="gene designation" value="Exosc10"/>
</dbReference>
<dbReference type="VEuPathDB" id="HostDB:ENSMUSG00000017264"/>
<dbReference type="eggNOG" id="KOG2206">
    <property type="taxonomic scope" value="Eukaryota"/>
</dbReference>
<dbReference type="GeneTree" id="ENSGT00390000015408"/>
<dbReference type="HOGENOM" id="CLU_010129_1_1_1"/>
<dbReference type="InParanoid" id="P56960"/>
<dbReference type="OMA" id="NIMRPQM"/>
<dbReference type="OrthoDB" id="2250022at2759"/>
<dbReference type="PhylomeDB" id="P56960"/>
<dbReference type="TreeFam" id="TF105991"/>
<dbReference type="Reactome" id="R-MMU-6791226">
    <property type="pathway name" value="Major pathway of rRNA processing in the nucleolus and cytosol"/>
</dbReference>
<dbReference type="BioGRID-ORCS" id="50912">
    <property type="hits" value="21 hits in 112 CRISPR screens"/>
</dbReference>
<dbReference type="ChiTaRS" id="Exosc10">
    <property type="organism name" value="mouse"/>
</dbReference>
<dbReference type="PRO" id="PR:P56960"/>
<dbReference type="Proteomes" id="UP000000589">
    <property type="component" value="Chromosome 4"/>
</dbReference>
<dbReference type="RNAct" id="P56960">
    <property type="molecule type" value="protein"/>
</dbReference>
<dbReference type="Bgee" id="ENSMUSG00000017264">
    <property type="expression patterns" value="Expressed in undifferentiated genital tubercle and 257 other cell types or tissues"/>
</dbReference>
<dbReference type="ExpressionAtlas" id="P56960">
    <property type="expression patterns" value="baseline and differential"/>
</dbReference>
<dbReference type="GO" id="GO:0005737">
    <property type="term" value="C:cytoplasm"/>
    <property type="evidence" value="ECO:0000250"/>
    <property type="project" value="UniProtKB"/>
</dbReference>
<dbReference type="GO" id="GO:0000177">
    <property type="term" value="C:cytoplasmic exosome (RNase complex)"/>
    <property type="evidence" value="ECO:0000303"/>
    <property type="project" value="ComplexPortal"/>
</dbReference>
<dbReference type="GO" id="GO:0005829">
    <property type="term" value="C:cytosol"/>
    <property type="evidence" value="ECO:0000266"/>
    <property type="project" value="ComplexPortal"/>
</dbReference>
<dbReference type="GO" id="GO:0000791">
    <property type="term" value="C:euchromatin"/>
    <property type="evidence" value="ECO:0007669"/>
    <property type="project" value="Ensembl"/>
</dbReference>
<dbReference type="GO" id="GO:0000178">
    <property type="term" value="C:exosome (RNase complex)"/>
    <property type="evidence" value="ECO:0000250"/>
    <property type="project" value="UniProtKB"/>
</dbReference>
<dbReference type="GO" id="GO:0000176">
    <property type="term" value="C:nuclear exosome (RNase complex)"/>
    <property type="evidence" value="ECO:0000250"/>
    <property type="project" value="UniProtKB"/>
</dbReference>
<dbReference type="GO" id="GO:0101019">
    <property type="term" value="C:nucleolar exosome (RNase complex)"/>
    <property type="evidence" value="ECO:0000303"/>
    <property type="project" value="ComplexPortal"/>
</dbReference>
<dbReference type="GO" id="GO:0005730">
    <property type="term" value="C:nucleolus"/>
    <property type="evidence" value="ECO:0000250"/>
    <property type="project" value="UniProtKB"/>
</dbReference>
<dbReference type="GO" id="GO:0005654">
    <property type="term" value="C:nucleoplasm"/>
    <property type="evidence" value="ECO:0007669"/>
    <property type="project" value="UniProtKB-SubCell"/>
</dbReference>
<dbReference type="GO" id="GO:0005634">
    <property type="term" value="C:nucleus"/>
    <property type="evidence" value="ECO:0000266"/>
    <property type="project" value="ComplexPortal"/>
</dbReference>
<dbReference type="GO" id="GO:0032040">
    <property type="term" value="C:small-subunit processome"/>
    <property type="evidence" value="ECO:0000250"/>
    <property type="project" value="UniProtKB"/>
</dbReference>
<dbReference type="GO" id="GO:0000175">
    <property type="term" value="F:3'-5'-RNA exonuclease activity"/>
    <property type="evidence" value="ECO:0007669"/>
    <property type="project" value="Ensembl"/>
</dbReference>
<dbReference type="GO" id="GO:0046872">
    <property type="term" value="F:metal ion binding"/>
    <property type="evidence" value="ECO:0007669"/>
    <property type="project" value="UniProtKB-KW"/>
</dbReference>
<dbReference type="GO" id="GO:0000166">
    <property type="term" value="F:nucleotide binding"/>
    <property type="evidence" value="ECO:0007669"/>
    <property type="project" value="InterPro"/>
</dbReference>
<dbReference type="GO" id="GO:0070034">
    <property type="term" value="F:telomerase RNA binding"/>
    <property type="evidence" value="ECO:0007669"/>
    <property type="project" value="Ensembl"/>
</dbReference>
<dbReference type="GO" id="GO:0071034">
    <property type="term" value="P:CUT catabolic process"/>
    <property type="evidence" value="ECO:0007669"/>
    <property type="project" value="Ensembl"/>
</dbReference>
<dbReference type="GO" id="GO:0006281">
    <property type="term" value="P:DNA repair"/>
    <property type="evidence" value="ECO:0007669"/>
    <property type="project" value="UniProtKB-KW"/>
</dbReference>
<dbReference type="GO" id="GO:0000467">
    <property type="term" value="P:exonucleolytic trimming to generate mature 3'-end of 5.8S rRNA from tricistronic rRNA transcript (SSU-rRNA, 5.8S rRNA, LSU-rRNA)"/>
    <property type="evidence" value="ECO:0007669"/>
    <property type="project" value="InterPro"/>
</dbReference>
<dbReference type="GO" id="GO:0071044">
    <property type="term" value="P:histone mRNA catabolic process"/>
    <property type="evidence" value="ECO:0000250"/>
    <property type="project" value="UniProtKB"/>
</dbReference>
<dbReference type="GO" id="GO:0032211">
    <property type="term" value="P:negative regulation of telomere maintenance via telomerase"/>
    <property type="evidence" value="ECO:0007669"/>
    <property type="project" value="Ensembl"/>
</dbReference>
<dbReference type="GO" id="GO:0071028">
    <property type="term" value="P:nuclear mRNA surveillance"/>
    <property type="evidence" value="ECO:0007669"/>
    <property type="project" value="Ensembl"/>
</dbReference>
<dbReference type="GO" id="GO:0071035">
    <property type="term" value="P:nuclear polyadenylation-dependent rRNA catabolic process"/>
    <property type="evidence" value="ECO:0007669"/>
    <property type="project" value="Ensembl"/>
</dbReference>
<dbReference type="GO" id="GO:0000184">
    <property type="term" value="P:nuclear-transcribed mRNA catabolic process, nonsense-mediated decay"/>
    <property type="evidence" value="ECO:0007669"/>
    <property type="project" value="UniProtKB-KW"/>
</dbReference>
<dbReference type="GO" id="GO:1905746">
    <property type="term" value="P:positive regulation of mRNA cis splicing, via spliceosome"/>
    <property type="evidence" value="ECO:0000315"/>
    <property type="project" value="MGI"/>
</dbReference>
<dbReference type="GO" id="GO:1904872">
    <property type="term" value="P:regulation of telomerase RNA localization to Cajal body"/>
    <property type="evidence" value="ECO:0007669"/>
    <property type="project" value="Ensembl"/>
</dbReference>
<dbReference type="GO" id="GO:0042274">
    <property type="term" value="P:ribosomal small subunit biogenesis"/>
    <property type="evidence" value="ECO:0000250"/>
    <property type="project" value="UniProtKB"/>
</dbReference>
<dbReference type="GO" id="GO:0006401">
    <property type="term" value="P:RNA catabolic process"/>
    <property type="evidence" value="ECO:0000266"/>
    <property type="project" value="ComplexPortal"/>
</dbReference>
<dbReference type="GO" id="GO:0006396">
    <property type="term" value="P:RNA processing"/>
    <property type="evidence" value="ECO:0000266"/>
    <property type="project" value="ComplexPortal"/>
</dbReference>
<dbReference type="CDD" id="cd06147">
    <property type="entry name" value="Rrp6p_like_exo"/>
    <property type="match status" value="1"/>
</dbReference>
<dbReference type="FunFam" id="3.30.420.10:FF:000022">
    <property type="entry name" value="Exosome component 10"/>
    <property type="match status" value="1"/>
</dbReference>
<dbReference type="FunFam" id="1.10.150.80:FF:000001">
    <property type="entry name" value="Putative exosome component 10"/>
    <property type="match status" value="1"/>
</dbReference>
<dbReference type="Gene3D" id="1.10.150.80">
    <property type="entry name" value="HRDC domain"/>
    <property type="match status" value="1"/>
</dbReference>
<dbReference type="Gene3D" id="3.30.420.10">
    <property type="entry name" value="Ribonuclease H-like superfamily/Ribonuclease H"/>
    <property type="match status" value="1"/>
</dbReference>
<dbReference type="InterPro" id="IPR002562">
    <property type="entry name" value="3'-5'_exonuclease_dom"/>
</dbReference>
<dbReference type="InterPro" id="IPR012588">
    <property type="entry name" value="Exosome-assoc_fac_Rrp6_N"/>
</dbReference>
<dbReference type="InterPro" id="IPR010997">
    <property type="entry name" value="HRDC-like_sf"/>
</dbReference>
<dbReference type="InterPro" id="IPR002121">
    <property type="entry name" value="HRDC_dom"/>
</dbReference>
<dbReference type="InterPro" id="IPR044876">
    <property type="entry name" value="HRDC_dom_sf"/>
</dbReference>
<dbReference type="InterPro" id="IPR012337">
    <property type="entry name" value="RNaseH-like_sf"/>
</dbReference>
<dbReference type="InterPro" id="IPR036397">
    <property type="entry name" value="RNaseH_sf"/>
</dbReference>
<dbReference type="InterPro" id="IPR045092">
    <property type="entry name" value="Rrp6-like"/>
</dbReference>
<dbReference type="InterPro" id="IPR049559">
    <property type="entry name" value="Rrp6p-like_exo"/>
</dbReference>
<dbReference type="PANTHER" id="PTHR12124:SF47">
    <property type="entry name" value="EXOSOME COMPONENT 10"/>
    <property type="match status" value="1"/>
</dbReference>
<dbReference type="PANTHER" id="PTHR12124">
    <property type="entry name" value="POLYMYOSITIS/SCLERODERMA AUTOANTIGEN-RELATED"/>
    <property type="match status" value="1"/>
</dbReference>
<dbReference type="Pfam" id="PF01612">
    <property type="entry name" value="DNA_pol_A_exo1"/>
    <property type="match status" value="1"/>
</dbReference>
<dbReference type="Pfam" id="PF00570">
    <property type="entry name" value="HRDC"/>
    <property type="match status" value="1"/>
</dbReference>
<dbReference type="Pfam" id="PF08066">
    <property type="entry name" value="PMC2NT"/>
    <property type="match status" value="1"/>
</dbReference>
<dbReference type="SMART" id="SM00474">
    <property type="entry name" value="35EXOc"/>
    <property type="match status" value="1"/>
</dbReference>
<dbReference type="SMART" id="SM00341">
    <property type="entry name" value="HRDC"/>
    <property type="match status" value="1"/>
</dbReference>
<dbReference type="SUPFAM" id="SSF47819">
    <property type="entry name" value="HRDC-like"/>
    <property type="match status" value="1"/>
</dbReference>
<dbReference type="SUPFAM" id="SSF53098">
    <property type="entry name" value="Ribonuclease H-like"/>
    <property type="match status" value="1"/>
</dbReference>
<dbReference type="PROSITE" id="PS50967">
    <property type="entry name" value="HRDC"/>
    <property type="match status" value="1"/>
</dbReference>